<feature type="chain" id="PRO_0000216307" description="Uncharacterized protein PM0812">
    <location>
        <begin position="1"/>
        <end position="42"/>
    </location>
</feature>
<keyword id="KW-1185">Reference proteome</keyword>
<sequence length="42" mass="4478">MTNIIKVGVIVAFLAALVVFDRSEQKAALHTEATVSAQVKHA</sequence>
<name>Y812_PASMU</name>
<protein>
    <recommendedName>
        <fullName>Uncharacterized protein PM0812</fullName>
    </recommendedName>
</protein>
<gene>
    <name type="ordered locus">PM0812</name>
</gene>
<dbReference type="EMBL" id="AE004439">
    <property type="protein sequence ID" value="AAK02896.1"/>
    <property type="molecule type" value="Genomic_DNA"/>
</dbReference>
<dbReference type="EnsemblBacteria" id="AAK02896">
    <property type="protein sequence ID" value="AAK02896"/>
    <property type="gene ID" value="PM0812"/>
</dbReference>
<dbReference type="KEGG" id="pmu:PM0812"/>
<dbReference type="HOGENOM" id="CLU_3255393_0_0_6"/>
<dbReference type="Proteomes" id="UP000000809">
    <property type="component" value="Chromosome"/>
</dbReference>
<proteinExistence type="predicted"/>
<reference key="1">
    <citation type="journal article" date="2001" name="Proc. Natl. Acad. Sci. U.S.A.">
        <title>Complete genomic sequence of Pasteurella multocida Pm70.</title>
        <authorList>
            <person name="May B.J."/>
            <person name="Zhang Q."/>
            <person name="Li L.L."/>
            <person name="Paustian M.L."/>
            <person name="Whittam T.S."/>
            <person name="Kapur V."/>
        </authorList>
    </citation>
    <scope>NUCLEOTIDE SEQUENCE [LARGE SCALE GENOMIC DNA]</scope>
    <source>
        <strain>Pm70</strain>
    </source>
</reference>
<accession>Q9CMK8</accession>
<organism>
    <name type="scientific">Pasteurella multocida (strain Pm70)</name>
    <dbReference type="NCBI Taxonomy" id="272843"/>
    <lineage>
        <taxon>Bacteria</taxon>
        <taxon>Pseudomonadati</taxon>
        <taxon>Pseudomonadota</taxon>
        <taxon>Gammaproteobacteria</taxon>
        <taxon>Pasteurellales</taxon>
        <taxon>Pasteurellaceae</taxon>
        <taxon>Pasteurella</taxon>
    </lineage>
</organism>